<sequence>MAVPKRRTSKTRKNKRRTHFKISVPGMTECPNCGEYKLSHRVCKNCGSYNGEEVAAK</sequence>
<protein>
    <recommendedName>
        <fullName evidence="1">Large ribosomal subunit protein bL32</fullName>
    </recommendedName>
    <alternativeName>
        <fullName evidence="2">50S ribosomal protein L32</fullName>
    </alternativeName>
</protein>
<comment type="similarity">
    <text evidence="1">Belongs to the bacterial ribosomal protein bL32 family.</text>
</comment>
<proteinExistence type="inferred from homology"/>
<accession>A6U0U5</accession>
<keyword id="KW-0687">Ribonucleoprotein</keyword>
<keyword id="KW-0689">Ribosomal protein</keyword>
<gene>
    <name evidence="1" type="primary">rpmF</name>
    <name type="ordered locus">SaurJH1_1209</name>
</gene>
<feature type="chain" id="PRO_1000079348" description="Large ribosomal subunit protein bL32">
    <location>
        <begin position="1"/>
        <end position="57"/>
    </location>
</feature>
<reference key="1">
    <citation type="submission" date="2007-06" db="EMBL/GenBank/DDBJ databases">
        <title>Complete sequence of chromosome of Staphylococcus aureus subsp. aureus JH1.</title>
        <authorList>
            <consortium name="US DOE Joint Genome Institute"/>
            <person name="Copeland A."/>
            <person name="Lucas S."/>
            <person name="Lapidus A."/>
            <person name="Barry K."/>
            <person name="Detter J.C."/>
            <person name="Glavina del Rio T."/>
            <person name="Hammon N."/>
            <person name="Israni S."/>
            <person name="Dalin E."/>
            <person name="Tice H."/>
            <person name="Pitluck S."/>
            <person name="Chain P."/>
            <person name="Malfatti S."/>
            <person name="Shin M."/>
            <person name="Vergez L."/>
            <person name="Schmutz J."/>
            <person name="Larimer F."/>
            <person name="Land M."/>
            <person name="Hauser L."/>
            <person name="Kyrpides N."/>
            <person name="Ivanova N."/>
            <person name="Tomasz A."/>
            <person name="Richardson P."/>
        </authorList>
    </citation>
    <scope>NUCLEOTIDE SEQUENCE [LARGE SCALE GENOMIC DNA]</scope>
    <source>
        <strain>JH1</strain>
    </source>
</reference>
<organism>
    <name type="scientific">Staphylococcus aureus (strain JH1)</name>
    <dbReference type="NCBI Taxonomy" id="359787"/>
    <lineage>
        <taxon>Bacteria</taxon>
        <taxon>Bacillati</taxon>
        <taxon>Bacillota</taxon>
        <taxon>Bacilli</taxon>
        <taxon>Bacillales</taxon>
        <taxon>Staphylococcaceae</taxon>
        <taxon>Staphylococcus</taxon>
    </lineage>
</organism>
<name>RL32_STAA2</name>
<dbReference type="EMBL" id="CP000736">
    <property type="protein sequence ID" value="ABR52063.1"/>
    <property type="molecule type" value="Genomic_DNA"/>
</dbReference>
<dbReference type="SMR" id="A6U0U5"/>
<dbReference type="KEGG" id="sah:SaurJH1_1209"/>
<dbReference type="HOGENOM" id="CLU_129084_1_3_9"/>
<dbReference type="GO" id="GO:0015934">
    <property type="term" value="C:large ribosomal subunit"/>
    <property type="evidence" value="ECO:0007669"/>
    <property type="project" value="InterPro"/>
</dbReference>
<dbReference type="GO" id="GO:0003735">
    <property type="term" value="F:structural constituent of ribosome"/>
    <property type="evidence" value="ECO:0007669"/>
    <property type="project" value="InterPro"/>
</dbReference>
<dbReference type="GO" id="GO:0006412">
    <property type="term" value="P:translation"/>
    <property type="evidence" value="ECO:0007669"/>
    <property type="project" value="UniProtKB-UniRule"/>
</dbReference>
<dbReference type="Gene3D" id="1.20.5.640">
    <property type="entry name" value="Single helix bin"/>
    <property type="match status" value="1"/>
</dbReference>
<dbReference type="HAMAP" id="MF_00340">
    <property type="entry name" value="Ribosomal_bL32"/>
    <property type="match status" value="1"/>
</dbReference>
<dbReference type="InterPro" id="IPR002677">
    <property type="entry name" value="Ribosomal_bL32"/>
</dbReference>
<dbReference type="InterPro" id="IPR044957">
    <property type="entry name" value="Ribosomal_bL32_bact"/>
</dbReference>
<dbReference type="InterPro" id="IPR011332">
    <property type="entry name" value="Ribosomal_zn-bd"/>
</dbReference>
<dbReference type="NCBIfam" id="TIGR01031">
    <property type="entry name" value="rpmF_bact"/>
    <property type="match status" value="1"/>
</dbReference>
<dbReference type="PANTHER" id="PTHR35534">
    <property type="entry name" value="50S RIBOSOMAL PROTEIN L32"/>
    <property type="match status" value="1"/>
</dbReference>
<dbReference type="PANTHER" id="PTHR35534:SF2">
    <property type="entry name" value="LARGE RIBOSOMAL SUBUNIT PROTEIN BL32"/>
    <property type="match status" value="1"/>
</dbReference>
<dbReference type="Pfam" id="PF01783">
    <property type="entry name" value="Ribosomal_L32p"/>
    <property type="match status" value="1"/>
</dbReference>
<dbReference type="SUPFAM" id="SSF57829">
    <property type="entry name" value="Zn-binding ribosomal proteins"/>
    <property type="match status" value="1"/>
</dbReference>
<evidence type="ECO:0000255" key="1">
    <source>
        <dbReference type="HAMAP-Rule" id="MF_00340"/>
    </source>
</evidence>
<evidence type="ECO:0000305" key="2"/>